<feature type="chain" id="PRO_1000140164" description="Anhydro-N-acetylmuramic acid kinase">
    <location>
        <begin position="1"/>
        <end position="377"/>
    </location>
</feature>
<feature type="binding site" evidence="1">
    <location>
        <begin position="12"/>
        <end position="19"/>
    </location>
    <ligand>
        <name>ATP</name>
        <dbReference type="ChEBI" id="CHEBI:30616"/>
    </ligand>
</feature>
<comment type="function">
    <text evidence="1">Catalyzes the specific phosphorylation of 1,6-anhydro-N-acetylmuramic acid (anhMurNAc) with the simultaneous cleavage of the 1,6-anhydro ring, generating MurNAc-6-P. Is required for the utilization of anhMurNAc either imported from the medium or derived from its own cell wall murein, and thus plays a role in cell wall recycling.</text>
</comment>
<comment type="catalytic activity">
    <reaction evidence="1">
        <text>1,6-anhydro-N-acetyl-beta-muramate + ATP + H2O = N-acetyl-D-muramate 6-phosphate + ADP + H(+)</text>
        <dbReference type="Rhea" id="RHEA:24952"/>
        <dbReference type="ChEBI" id="CHEBI:15377"/>
        <dbReference type="ChEBI" id="CHEBI:15378"/>
        <dbReference type="ChEBI" id="CHEBI:30616"/>
        <dbReference type="ChEBI" id="CHEBI:58690"/>
        <dbReference type="ChEBI" id="CHEBI:58722"/>
        <dbReference type="ChEBI" id="CHEBI:456216"/>
        <dbReference type="EC" id="2.7.1.170"/>
    </reaction>
</comment>
<comment type="pathway">
    <text evidence="1">Amino-sugar metabolism; 1,6-anhydro-N-acetylmuramate degradation.</text>
</comment>
<comment type="pathway">
    <text evidence="1">Cell wall biogenesis; peptidoglycan recycling.</text>
</comment>
<comment type="similarity">
    <text evidence="1">Belongs to the anhydro-N-acetylmuramic acid kinase family.</text>
</comment>
<sequence>MTMKRAIGLMSGTSLDGIDVALIESDGESIRIVKSANGFIAPLGPTGYRGYREDEKTLLREATRDAEGIRARADRPGRLPQAEDFVTHAHAEAIEAFLAENGLSPADIDVVGFHGQTVIHRPKLGLTVQIGDGAALARRLGIRVVSDMRADDVAQGGQGAPLVPVFHKALAEAAGFAGPLGILNIGGLANATLIDSSGNMLAFDTGPGNGPINDWMKERTGRDLDEDGATAARGTVDKDLLENLLGHPLILRQPPKSLDRNWFSHRLAGYLTIEDGAATLTAFTAHAVARSLAFASERPTRWIVGGGGAKNRTLMTMLERLLKAEVLNADAIGWSSDFLEAQAFAYLALRALEGLPLTYPTTTGVSEPVTGGLVSEP</sequence>
<accession>B1ZHK6</accession>
<reference key="1">
    <citation type="submission" date="2008-04" db="EMBL/GenBank/DDBJ databases">
        <title>Complete sequence of chromosome of Methylobacterium populi BJ001.</title>
        <authorList>
            <consortium name="US DOE Joint Genome Institute"/>
            <person name="Copeland A."/>
            <person name="Lucas S."/>
            <person name="Lapidus A."/>
            <person name="Glavina del Rio T."/>
            <person name="Dalin E."/>
            <person name="Tice H."/>
            <person name="Bruce D."/>
            <person name="Goodwin L."/>
            <person name="Pitluck S."/>
            <person name="Chertkov O."/>
            <person name="Brettin T."/>
            <person name="Detter J.C."/>
            <person name="Han C."/>
            <person name="Kuske C.R."/>
            <person name="Schmutz J."/>
            <person name="Larimer F."/>
            <person name="Land M."/>
            <person name="Hauser L."/>
            <person name="Kyrpides N."/>
            <person name="Mikhailova N."/>
            <person name="Marx C."/>
            <person name="Richardson P."/>
        </authorList>
    </citation>
    <scope>NUCLEOTIDE SEQUENCE [LARGE SCALE GENOMIC DNA]</scope>
    <source>
        <strain>ATCC BAA-705 / NCIMB 13946 / BJ001</strain>
    </source>
</reference>
<keyword id="KW-0067">ATP-binding</keyword>
<keyword id="KW-0119">Carbohydrate metabolism</keyword>
<keyword id="KW-0418">Kinase</keyword>
<keyword id="KW-0547">Nucleotide-binding</keyword>
<keyword id="KW-0808">Transferase</keyword>
<gene>
    <name evidence="1" type="primary">anmK</name>
    <name type="ordered locus">Mpop_3172</name>
</gene>
<organism>
    <name type="scientific">Methylorubrum populi (strain ATCC BAA-705 / NCIMB 13946 / BJ001)</name>
    <name type="common">Methylobacterium populi</name>
    <dbReference type="NCBI Taxonomy" id="441620"/>
    <lineage>
        <taxon>Bacteria</taxon>
        <taxon>Pseudomonadati</taxon>
        <taxon>Pseudomonadota</taxon>
        <taxon>Alphaproteobacteria</taxon>
        <taxon>Hyphomicrobiales</taxon>
        <taxon>Methylobacteriaceae</taxon>
        <taxon>Methylorubrum</taxon>
    </lineage>
</organism>
<name>ANMK_METPB</name>
<proteinExistence type="inferred from homology"/>
<dbReference type="EC" id="2.7.1.170" evidence="1"/>
<dbReference type="EMBL" id="CP001029">
    <property type="protein sequence ID" value="ACB81324.1"/>
    <property type="molecule type" value="Genomic_DNA"/>
</dbReference>
<dbReference type="RefSeq" id="WP_012455041.1">
    <property type="nucleotide sequence ID" value="NC_010725.1"/>
</dbReference>
<dbReference type="SMR" id="B1ZHK6"/>
<dbReference type="STRING" id="441620.Mpop_3172"/>
<dbReference type="KEGG" id="mpo:Mpop_3172"/>
<dbReference type="eggNOG" id="COG2377">
    <property type="taxonomic scope" value="Bacteria"/>
</dbReference>
<dbReference type="HOGENOM" id="CLU_038782_3_0_5"/>
<dbReference type="OrthoDB" id="9763949at2"/>
<dbReference type="UniPathway" id="UPA00343"/>
<dbReference type="UniPathway" id="UPA00544"/>
<dbReference type="Proteomes" id="UP000007136">
    <property type="component" value="Chromosome"/>
</dbReference>
<dbReference type="GO" id="GO:0005524">
    <property type="term" value="F:ATP binding"/>
    <property type="evidence" value="ECO:0007669"/>
    <property type="project" value="UniProtKB-UniRule"/>
</dbReference>
<dbReference type="GO" id="GO:0016301">
    <property type="term" value="F:kinase activity"/>
    <property type="evidence" value="ECO:0007669"/>
    <property type="project" value="UniProtKB-KW"/>
</dbReference>
<dbReference type="GO" id="GO:0016773">
    <property type="term" value="F:phosphotransferase activity, alcohol group as acceptor"/>
    <property type="evidence" value="ECO:0007669"/>
    <property type="project" value="UniProtKB-UniRule"/>
</dbReference>
<dbReference type="GO" id="GO:0097175">
    <property type="term" value="P:1,6-anhydro-N-acetyl-beta-muramic acid catabolic process"/>
    <property type="evidence" value="ECO:0007669"/>
    <property type="project" value="UniProtKB-UniRule"/>
</dbReference>
<dbReference type="GO" id="GO:0006040">
    <property type="term" value="P:amino sugar metabolic process"/>
    <property type="evidence" value="ECO:0007669"/>
    <property type="project" value="InterPro"/>
</dbReference>
<dbReference type="GO" id="GO:0009254">
    <property type="term" value="P:peptidoglycan turnover"/>
    <property type="evidence" value="ECO:0007669"/>
    <property type="project" value="UniProtKB-UniRule"/>
</dbReference>
<dbReference type="Gene3D" id="3.30.420.40">
    <property type="match status" value="2"/>
</dbReference>
<dbReference type="HAMAP" id="MF_01270">
    <property type="entry name" value="AnhMurNAc_kinase"/>
    <property type="match status" value="1"/>
</dbReference>
<dbReference type="InterPro" id="IPR005338">
    <property type="entry name" value="Anhydro_N_Ac-Mur_kinase"/>
</dbReference>
<dbReference type="InterPro" id="IPR043129">
    <property type="entry name" value="ATPase_NBD"/>
</dbReference>
<dbReference type="NCBIfam" id="NF007141">
    <property type="entry name" value="PRK09585.1-5"/>
    <property type="match status" value="1"/>
</dbReference>
<dbReference type="PANTHER" id="PTHR30605">
    <property type="entry name" value="ANHYDRO-N-ACETYLMURAMIC ACID KINASE"/>
    <property type="match status" value="1"/>
</dbReference>
<dbReference type="PANTHER" id="PTHR30605:SF0">
    <property type="entry name" value="ANHYDRO-N-ACETYLMURAMIC ACID KINASE"/>
    <property type="match status" value="1"/>
</dbReference>
<dbReference type="Pfam" id="PF03702">
    <property type="entry name" value="AnmK"/>
    <property type="match status" value="1"/>
</dbReference>
<dbReference type="SUPFAM" id="SSF53067">
    <property type="entry name" value="Actin-like ATPase domain"/>
    <property type="match status" value="1"/>
</dbReference>
<protein>
    <recommendedName>
        <fullName evidence="1">Anhydro-N-acetylmuramic acid kinase</fullName>
        <ecNumber evidence="1">2.7.1.170</ecNumber>
    </recommendedName>
    <alternativeName>
        <fullName evidence="1">AnhMurNAc kinase</fullName>
    </alternativeName>
</protein>
<evidence type="ECO:0000255" key="1">
    <source>
        <dbReference type="HAMAP-Rule" id="MF_01270"/>
    </source>
</evidence>